<gene>
    <name evidence="1" type="primary">rplW</name>
    <name type="ordered locus">PP_0456</name>
</gene>
<protein>
    <recommendedName>
        <fullName evidence="1">Large ribosomal subunit protein uL23</fullName>
    </recommendedName>
    <alternativeName>
        <fullName evidence="2">50S ribosomal protein L23</fullName>
    </alternativeName>
</protein>
<feature type="chain" id="PRO_0000272807" description="Large ribosomal subunit protein uL23">
    <location>
        <begin position="1"/>
        <end position="99"/>
    </location>
</feature>
<accession>Q88QN3</accession>
<sequence>MNQERVFKVLLGPHVSEKATVLAEKKGQFVFKVATDATKLEIKKAVEGLFNVKVENVSTVNVLGKTKRTARGLGKRNDWKKAIVSLQPGQDLDFSSSAE</sequence>
<reference key="1">
    <citation type="journal article" date="2002" name="Environ. Microbiol.">
        <title>Complete genome sequence and comparative analysis of the metabolically versatile Pseudomonas putida KT2440.</title>
        <authorList>
            <person name="Nelson K.E."/>
            <person name="Weinel C."/>
            <person name="Paulsen I.T."/>
            <person name="Dodson R.J."/>
            <person name="Hilbert H."/>
            <person name="Martins dos Santos V.A.P."/>
            <person name="Fouts D.E."/>
            <person name="Gill S.R."/>
            <person name="Pop M."/>
            <person name="Holmes M."/>
            <person name="Brinkac L.M."/>
            <person name="Beanan M.J."/>
            <person name="DeBoy R.T."/>
            <person name="Daugherty S.C."/>
            <person name="Kolonay J.F."/>
            <person name="Madupu R."/>
            <person name="Nelson W.C."/>
            <person name="White O."/>
            <person name="Peterson J.D."/>
            <person name="Khouri H.M."/>
            <person name="Hance I."/>
            <person name="Chris Lee P."/>
            <person name="Holtzapple E.K."/>
            <person name="Scanlan D."/>
            <person name="Tran K."/>
            <person name="Moazzez A."/>
            <person name="Utterback T.R."/>
            <person name="Rizzo M."/>
            <person name="Lee K."/>
            <person name="Kosack D."/>
            <person name="Moestl D."/>
            <person name="Wedler H."/>
            <person name="Lauber J."/>
            <person name="Stjepandic D."/>
            <person name="Hoheisel J."/>
            <person name="Straetz M."/>
            <person name="Heim S."/>
            <person name="Kiewitz C."/>
            <person name="Eisen J.A."/>
            <person name="Timmis K.N."/>
            <person name="Duesterhoeft A."/>
            <person name="Tuemmler B."/>
            <person name="Fraser C.M."/>
        </authorList>
    </citation>
    <scope>NUCLEOTIDE SEQUENCE [LARGE SCALE GENOMIC DNA]</scope>
    <source>
        <strain>ATCC 47054 / DSM 6125 / CFBP 8728 / NCIMB 11950 / KT2440</strain>
    </source>
</reference>
<organism>
    <name type="scientific">Pseudomonas putida (strain ATCC 47054 / DSM 6125 / CFBP 8728 / NCIMB 11950 / KT2440)</name>
    <dbReference type="NCBI Taxonomy" id="160488"/>
    <lineage>
        <taxon>Bacteria</taxon>
        <taxon>Pseudomonadati</taxon>
        <taxon>Pseudomonadota</taxon>
        <taxon>Gammaproteobacteria</taxon>
        <taxon>Pseudomonadales</taxon>
        <taxon>Pseudomonadaceae</taxon>
        <taxon>Pseudomonas</taxon>
    </lineage>
</organism>
<name>RL23_PSEPK</name>
<evidence type="ECO:0000255" key="1">
    <source>
        <dbReference type="HAMAP-Rule" id="MF_01369"/>
    </source>
</evidence>
<evidence type="ECO:0000305" key="2"/>
<comment type="function">
    <text evidence="1">One of the early assembly proteins it binds 23S rRNA. One of the proteins that surrounds the polypeptide exit tunnel on the outside of the ribosome. Forms the main docking site for trigger factor binding to the ribosome.</text>
</comment>
<comment type="subunit">
    <text evidence="1">Part of the 50S ribosomal subunit. Contacts protein L29, and trigger factor when it is bound to the ribosome.</text>
</comment>
<comment type="similarity">
    <text evidence="1">Belongs to the universal ribosomal protein uL23 family.</text>
</comment>
<dbReference type="EMBL" id="AE015451">
    <property type="protein sequence ID" value="AAN66086.1"/>
    <property type="molecule type" value="Genomic_DNA"/>
</dbReference>
<dbReference type="RefSeq" id="NP_742622.1">
    <property type="nucleotide sequence ID" value="NC_002947.4"/>
</dbReference>
<dbReference type="RefSeq" id="WP_003255484.1">
    <property type="nucleotide sequence ID" value="NZ_CP169744.1"/>
</dbReference>
<dbReference type="SMR" id="Q88QN3"/>
<dbReference type="STRING" id="160488.PP_0456"/>
<dbReference type="PaxDb" id="160488-PP_0456"/>
<dbReference type="GeneID" id="97165981"/>
<dbReference type="KEGG" id="ppu:PP_0456"/>
<dbReference type="PATRIC" id="fig|160488.4.peg.488"/>
<dbReference type="eggNOG" id="COG0089">
    <property type="taxonomic scope" value="Bacteria"/>
</dbReference>
<dbReference type="HOGENOM" id="CLU_037562_3_1_6"/>
<dbReference type="OrthoDB" id="9793353at2"/>
<dbReference type="PhylomeDB" id="Q88QN3"/>
<dbReference type="BioCyc" id="PPUT160488:G1G01-502-MONOMER"/>
<dbReference type="Proteomes" id="UP000000556">
    <property type="component" value="Chromosome"/>
</dbReference>
<dbReference type="GO" id="GO:1990904">
    <property type="term" value="C:ribonucleoprotein complex"/>
    <property type="evidence" value="ECO:0007669"/>
    <property type="project" value="UniProtKB-KW"/>
</dbReference>
<dbReference type="GO" id="GO:0005840">
    <property type="term" value="C:ribosome"/>
    <property type="evidence" value="ECO:0007669"/>
    <property type="project" value="UniProtKB-KW"/>
</dbReference>
<dbReference type="GO" id="GO:0019843">
    <property type="term" value="F:rRNA binding"/>
    <property type="evidence" value="ECO:0007669"/>
    <property type="project" value="UniProtKB-UniRule"/>
</dbReference>
<dbReference type="GO" id="GO:0003735">
    <property type="term" value="F:structural constituent of ribosome"/>
    <property type="evidence" value="ECO:0007669"/>
    <property type="project" value="InterPro"/>
</dbReference>
<dbReference type="GO" id="GO:0006412">
    <property type="term" value="P:translation"/>
    <property type="evidence" value="ECO:0007669"/>
    <property type="project" value="UniProtKB-UniRule"/>
</dbReference>
<dbReference type="FunFam" id="3.30.70.330:FF:000001">
    <property type="entry name" value="50S ribosomal protein L23"/>
    <property type="match status" value="1"/>
</dbReference>
<dbReference type="Gene3D" id="3.30.70.330">
    <property type="match status" value="1"/>
</dbReference>
<dbReference type="HAMAP" id="MF_01369_B">
    <property type="entry name" value="Ribosomal_uL23_B"/>
    <property type="match status" value="1"/>
</dbReference>
<dbReference type="InterPro" id="IPR012677">
    <property type="entry name" value="Nucleotide-bd_a/b_plait_sf"/>
</dbReference>
<dbReference type="InterPro" id="IPR013025">
    <property type="entry name" value="Ribosomal_uL23-like"/>
</dbReference>
<dbReference type="InterPro" id="IPR012678">
    <property type="entry name" value="Ribosomal_uL23/eL15/eS24_sf"/>
</dbReference>
<dbReference type="NCBIfam" id="NF004359">
    <property type="entry name" value="PRK05738.1-3"/>
    <property type="match status" value="1"/>
</dbReference>
<dbReference type="NCBIfam" id="NF004363">
    <property type="entry name" value="PRK05738.2-4"/>
    <property type="match status" value="1"/>
</dbReference>
<dbReference type="PANTHER" id="PTHR11620">
    <property type="entry name" value="60S RIBOSOMAL PROTEIN L23A"/>
    <property type="match status" value="1"/>
</dbReference>
<dbReference type="Pfam" id="PF00276">
    <property type="entry name" value="Ribosomal_L23"/>
    <property type="match status" value="1"/>
</dbReference>
<dbReference type="SUPFAM" id="SSF54189">
    <property type="entry name" value="Ribosomal proteins S24e, L23 and L15e"/>
    <property type="match status" value="1"/>
</dbReference>
<proteinExistence type="inferred from homology"/>
<keyword id="KW-1185">Reference proteome</keyword>
<keyword id="KW-0687">Ribonucleoprotein</keyword>
<keyword id="KW-0689">Ribosomal protein</keyword>
<keyword id="KW-0694">RNA-binding</keyword>
<keyword id="KW-0699">rRNA-binding</keyword>